<reference key="1">
    <citation type="journal article" date="2004" name="Nat. Biotechnol.">
        <title>The genome sequence of the anaerobic, sulfate-reducing bacterium Desulfovibrio vulgaris Hildenborough.</title>
        <authorList>
            <person name="Heidelberg J.F."/>
            <person name="Seshadri R."/>
            <person name="Haveman S.A."/>
            <person name="Hemme C.L."/>
            <person name="Paulsen I.T."/>
            <person name="Kolonay J.F."/>
            <person name="Eisen J.A."/>
            <person name="Ward N.L."/>
            <person name="Methe B.A."/>
            <person name="Brinkac L.M."/>
            <person name="Daugherty S.C."/>
            <person name="DeBoy R.T."/>
            <person name="Dodson R.J."/>
            <person name="Durkin A.S."/>
            <person name="Madupu R."/>
            <person name="Nelson W.C."/>
            <person name="Sullivan S.A."/>
            <person name="Fouts D.E."/>
            <person name="Haft D.H."/>
            <person name="Selengut J."/>
            <person name="Peterson J.D."/>
            <person name="Davidsen T.M."/>
            <person name="Zafar N."/>
            <person name="Zhou L."/>
            <person name="Radune D."/>
            <person name="Dimitrov G."/>
            <person name="Hance M."/>
            <person name="Tran K."/>
            <person name="Khouri H.M."/>
            <person name="Gill J."/>
            <person name="Utterback T.R."/>
            <person name="Feldblyum T.V."/>
            <person name="Wall J.D."/>
            <person name="Voordouw G."/>
            <person name="Fraser C.M."/>
        </authorList>
    </citation>
    <scope>NUCLEOTIDE SEQUENCE [LARGE SCALE GENOMIC DNA]</scope>
    <source>
        <strain>ATCC 29579 / DSM 644 / CCUG 34227 / NCIMB 8303 / VKM B-1760 / Hildenborough</strain>
    </source>
</reference>
<proteinExistence type="evidence at protein level"/>
<evidence type="ECO:0000255" key="1">
    <source>
        <dbReference type="HAMAP-Rule" id="MF_00283"/>
    </source>
</evidence>
<sequence length="798" mass="87706">MLLSLKWLREFVPFEGTAAELGDRLTMLGLELEEIIRPFDAIEPIVVGHVVSRERHPEADKLSVCKVDVGQGEPLDIVCGAPNVAAGQRVPVALVGTTMPGGMVIKKAKLRGQPSHGMICSERELGLGEDHDGIMVLPESFRIGARLVDELDLDREVCDIAITPNRADCLSVLGLAREVALAFGLPLTMPALDLKEEGADASNALRIDIPDASLCPLFHGRVLEGAAVRKSPAWMRYRLIAVGVRPISNIVDVTNYILMELGQPLHAYDLDLLAGGRIEVSAAREGERLTTLDGVERVLTSNDLLIRDGEKPVGLAGVMGGAETEISDKSSRVFLEAAVFRPGTIRKTARRLGLSSEASYRFERGVDQVVCTYAMNRAAQLIAGLSGATLRPGICHNEPLPWQAPVLRFRRARGEALLGISLDETFCRETLERLGCKVDAADAADWKVTAPSHRRDFEREADLIEEVARVRGMDTIEPVLPKVMRPLDRAGAPESKYSFWLRLKHWAAGLGLNEAINYSFVGQKDLDHLNLAVDGRIPIMNPLTADQNVLRTELAPGLLQNLRHNIAQGNAGLRLFEVAHIFEADATSDTTARERARLDILVYGSRYDSQWPHVEADADYADIKGIVEHCLAFLHLEGATFTLAASHPFLMPCVDVAVQGRQVGVIGRVRPEIADAYHARKDAWLADLDLDVLRELHDAARIAFRSLPVYPPVRRDITVAAPGSLQVGAVLDHILGLRLPLLCGVELIDVFEPEGKDERNLTFRMTFRHASRTLKDAEVDKERDKVAHSLVEKLPVRI</sequence>
<comment type="catalytic activity">
    <reaction evidence="1">
        <text>tRNA(Phe) + L-phenylalanine + ATP = L-phenylalanyl-tRNA(Phe) + AMP + diphosphate + H(+)</text>
        <dbReference type="Rhea" id="RHEA:19413"/>
        <dbReference type="Rhea" id="RHEA-COMP:9668"/>
        <dbReference type="Rhea" id="RHEA-COMP:9699"/>
        <dbReference type="ChEBI" id="CHEBI:15378"/>
        <dbReference type="ChEBI" id="CHEBI:30616"/>
        <dbReference type="ChEBI" id="CHEBI:33019"/>
        <dbReference type="ChEBI" id="CHEBI:58095"/>
        <dbReference type="ChEBI" id="CHEBI:78442"/>
        <dbReference type="ChEBI" id="CHEBI:78531"/>
        <dbReference type="ChEBI" id="CHEBI:456215"/>
        <dbReference type="EC" id="6.1.1.20"/>
    </reaction>
</comment>
<comment type="cofactor">
    <cofactor evidence="1">
        <name>Mg(2+)</name>
        <dbReference type="ChEBI" id="CHEBI:18420"/>
    </cofactor>
    <text evidence="1">Binds 2 magnesium ions per tetramer.</text>
</comment>
<comment type="subunit">
    <text evidence="1">Tetramer of two alpha and two beta subunits.</text>
</comment>
<comment type="interaction">
    <interactant intactId="EBI-10066832">
        <id>Q728S0</id>
    </interactant>
    <interactant intactId="EBI-10066828">
        <id>Q728R9</id>
        <label>pheS</label>
    </interactant>
    <organismsDiffer>false</organismsDiffer>
    <experiments>3</experiments>
</comment>
<comment type="subcellular location">
    <subcellularLocation>
        <location evidence="1">Cytoplasm</location>
    </subcellularLocation>
</comment>
<comment type="similarity">
    <text evidence="1">Belongs to the phenylalanyl-tRNA synthetase beta subunit family. Type 1 subfamily.</text>
</comment>
<organism>
    <name type="scientific">Nitratidesulfovibrio vulgaris (strain ATCC 29579 / DSM 644 / CCUG 34227 / NCIMB 8303 / VKM B-1760 / Hildenborough)</name>
    <name type="common">Desulfovibrio vulgaris</name>
    <dbReference type="NCBI Taxonomy" id="882"/>
    <lineage>
        <taxon>Bacteria</taxon>
        <taxon>Pseudomonadati</taxon>
        <taxon>Thermodesulfobacteriota</taxon>
        <taxon>Desulfovibrionia</taxon>
        <taxon>Desulfovibrionales</taxon>
        <taxon>Desulfovibrionaceae</taxon>
        <taxon>Nitratidesulfovibrio</taxon>
    </lineage>
</organism>
<dbReference type="EC" id="6.1.1.20" evidence="1"/>
<dbReference type="EMBL" id="AE017285">
    <property type="protein sequence ID" value="AAS97005.1"/>
    <property type="molecule type" value="Genomic_DNA"/>
</dbReference>
<dbReference type="RefSeq" id="WP_010939803.1">
    <property type="nucleotide sequence ID" value="NC_002937.3"/>
</dbReference>
<dbReference type="RefSeq" id="YP_011745.1">
    <property type="nucleotide sequence ID" value="NC_002937.3"/>
</dbReference>
<dbReference type="SMR" id="Q728S0"/>
<dbReference type="IntAct" id="Q728S0">
    <property type="interactions" value="2"/>
</dbReference>
<dbReference type="STRING" id="882.DVU_2533"/>
<dbReference type="PaxDb" id="882-DVU_2533"/>
<dbReference type="EnsemblBacteria" id="AAS97005">
    <property type="protein sequence ID" value="AAS97005"/>
    <property type="gene ID" value="DVU_2533"/>
</dbReference>
<dbReference type="KEGG" id="dvu:DVU_2533"/>
<dbReference type="PATRIC" id="fig|882.5.peg.2291"/>
<dbReference type="eggNOG" id="COG0072">
    <property type="taxonomic scope" value="Bacteria"/>
</dbReference>
<dbReference type="eggNOG" id="COG0073">
    <property type="taxonomic scope" value="Bacteria"/>
</dbReference>
<dbReference type="HOGENOM" id="CLU_016891_0_0_7"/>
<dbReference type="OrthoDB" id="9805455at2"/>
<dbReference type="PhylomeDB" id="Q728S0"/>
<dbReference type="Proteomes" id="UP000002194">
    <property type="component" value="Chromosome"/>
</dbReference>
<dbReference type="GO" id="GO:0009328">
    <property type="term" value="C:phenylalanine-tRNA ligase complex"/>
    <property type="evidence" value="ECO:0007669"/>
    <property type="project" value="TreeGrafter"/>
</dbReference>
<dbReference type="GO" id="GO:0005524">
    <property type="term" value="F:ATP binding"/>
    <property type="evidence" value="ECO:0007669"/>
    <property type="project" value="UniProtKB-UniRule"/>
</dbReference>
<dbReference type="GO" id="GO:0000287">
    <property type="term" value="F:magnesium ion binding"/>
    <property type="evidence" value="ECO:0007669"/>
    <property type="project" value="UniProtKB-UniRule"/>
</dbReference>
<dbReference type="GO" id="GO:0004826">
    <property type="term" value="F:phenylalanine-tRNA ligase activity"/>
    <property type="evidence" value="ECO:0007669"/>
    <property type="project" value="UniProtKB-UniRule"/>
</dbReference>
<dbReference type="GO" id="GO:0000049">
    <property type="term" value="F:tRNA binding"/>
    <property type="evidence" value="ECO:0007669"/>
    <property type="project" value="UniProtKB-KW"/>
</dbReference>
<dbReference type="GO" id="GO:0006432">
    <property type="term" value="P:phenylalanyl-tRNA aminoacylation"/>
    <property type="evidence" value="ECO:0007669"/>
    <property type="project" value="UniProtKB-UniRule"/>
</dbReference>
<dbReference type="CDD" id="cd00769">
    <property type="entry name" value="PheRS_beta_core"/>
    <property type="match status" value="1"/>
</dbReference>
<dbReference type="CDD" id="cd02796">
    <property type="entry name" value="tRNA_bind_bactPheRS"/>
    <property type="match status" value="1"/>
</dbReference>
<dbReference type="FunFam" id="2.40.50.140:FF:000045">
    <property type="entry name" value="Phenylalanine--tRNA ligase beta subunit"/>
    <property type="match status" value="1"/>
</dbReference>
<dbReference type="FunFam" id="3.50.40.10:FF:000001">
    <property type="entry name" value="Phenylalanine--tRNA ligase beta subunit"/>
    <property type="match status" value="1"/>
</dbReference>
<dbReference type="Gene3D" id="3.30.56.10">
    <property type="match status" value="2"/>
</dbReference>
<dbReference type="Gene3D" id="3.30.930.10">
    <property type="entry name" value="Bira Bifunctional Protein, Domain 2"/>
    <property type="match status" value="1"/>
</dbReference>
<dbReference type="Gene3D" id="3.30.70.380">
    <property type="entry name" value="Ferrodoxin-fold anticodon-binding domain"/>
    <property type="match status" value="1"/>
</dbReference>
<dbReference type="Gene3D" id="2.40.50.140">
    <property type="entry name" value="Nucleic acid-binding proteins"/>
    <property type="match status" value="1"/>
</dbReference>
<dbReference type="Gene3D" id="3.50.40.10">
    <property type="entry name" value="Phenylalanyl-trna Synthetase, Chain B, domain 3"/>
    <property type="match status" value="1"/>
</dbReference>
<dbReference type="HAMAP" id="MF_00283">
    <property type="entry name" value="Phe_tRNA_synth_beta1"/>
    <property type="match status" value="1"/>
</dbReference>
<dbReference type="InterPro" id="IPR045864">
    <property type="entry name" value="aa-tRNA-synth_II/BPL/LPL"/>
</dbReference>
<dbReference type="InterPro" id="IPR005146">
    <property type="entry name" value="B3/B4_tRNA-bd"/>
</dbReference>
<dbReference type="InterPro" id="IPR009061">
    <property type="entry name" value="DNA-bd_dom_put_sf"/>
</dbReference>
<dbReference type="InterPro" id="IPR005121">
    <property type="entry name" value="Fdx_antiC-bd"/>
</dbReference>
<dbReference type="InterPro" id="IPR036690">
    <property type="entry name" value="Fdx_antiC-bd_sf"/>
</dbReference>
<dbReference type="InterPro" id="IPR012340">
    <property type="entry name" value="NA-bd_OB-fold"/>
</dbReference>
<dbReference type="InterPro" id="IPR045060">
    <property type="entry name" value="Phe-tRNA-ligase_IIc_bsu"/>
</dbReference>
<dbReference type="InterPro" id="IPR004532">
    <property type="entry name" value="Phe-tRNA-ligase_IIc_bsu_bact"/>
</dbReference>
<dbReference type="InterPro" id="IPR020825">
    <property type="entry name" value="Phe-tRNA_synthase-like_B3/B4"/>
</dbReference>
<dbReference type="InterPro" id="IPR041616">
    <property type="entry name" value="PheRS_beta_core"/>
</dbReference>
<dbReference type="InterPro" id="IPR002547">
    <property type="entry name" value="tRNA-bd_dom"/>
</dbReference>
<dbReference type="InterPro" id="IPR033714">
    <property type="entry name" value="tRNA_bind_bactPheRS"/>
</dbReference>
<dbReference type="InterPro" id="IPR005147">
    <property type="entry name" value="tRNA_synthase_B5-dom"/>
</dbReference>
<dbReference type="NCBIfam" id="TIGR00472">
    <property type="entry name" value="pheT_bact"/>
    <property type="match status" value="1"/>
</dbReference>
<dbReference type="NCBIfam" id="NF045760">
    <property type="entry name" value="YtpR"/>
    <property type="match status" value="1"/>
</dbReference>
<dbReference type="PANTHER" id="PTHR10947:SF0">
    <property type="entry name" value="PHENYLALANINE--TRNA LIGASE BETA SUBUNIT"/>
    <property type="match status" value="1"/>
</dbReference>
<dbReference type="PANTHER" id="PTHR10947">
    <property type="entry name" value="PHENYLALANYL-TRNA SYNTHETASE BETA CHAIN AND LEUCINE-RICH REPEAT-CONTAINING PROTEIN 47"/>
    <property type="match status" value="1"/>
</dbReference>
<dbReference type="Pfam" id="PF03483">
    <property type="entry name" value="B3_4"/>
    <property type="match status" value="1"/>
</dbReference>
<dbReference type="Pfam" id="PF03484">
    <property type="entry name" value="B5"/>
    <property type="match status" value="1"/>
</dbReference>
<dbReference type="Pfam" id="PF03147">
    <property type="entry name" value="FDX-ACB"/>
    <property type="match status" value="1"/>
</dbReference>
<dbReference type="Pfam" id="PF01588">
    <property type="entry name" value="tRNA_bind"/>
    <property type="match status" value="1"/>
</dbReference>
<dbReference type="Pfam" id="PF17759">
    <property type="entry name" value="tRNA_synthFbeta"/>
    <property type="match status" value="1"/>
</dbReference>
<dbReference type="SMART" id="SM00873">
    <property type="entry name" value="B3_4"/>
    <property type="match status" value="1"/>
</dbReference>
<dbReference type="SMART" id="SM00874">
    <property type="entry name" value="B5"/>
    <property type="match status" value="1"/>
</dbReference>
<dbReference type="SMART" id="SM00896">
    <property type="entry name" value="FDX-ACB"/>
    <property type="match status" value="1"/>
</dbReference>
<dbReference type="SUPFAM" id="SSF54991">
    <property type="entry name" value="Anticodon-binding domain of PheRS"/>
    <property type="match status" value="1"/>
</dbReference>
<dbReference type="SUPFAM" id="SSF55681">
    <property type="entry name" value="Class II aaRS and biotin synthetases"/>
    <property type="match status" value="1"/>
</dbReference>
<dbReference type="SUPFAM" id="SSF50249">
    <property type="entry name" value="Nucleic acid-binding proteins"/>
    <property type="match status" value="1"/>
</dbReference>
<dbReference type="SUPFAM" id="SSF56037">
    <property type="entry name" value="PheT/TilS domain"/>
    <property type="match status" value="1"/>
</dbReference>
<dbReference type="SUPFAM" id="SSF46955">
    <property type="entry name" value="Putative DNA-binding domain"/>
    <property type="match status" value="1"/>
</dbReference>
<dbReference type="PROSITE" id="PS51483">
    <property type="entry name" value="B5"/>
    <property type="match status" value="1"/>
</dbReference>
<dbReference type="PROSITE" id="PS51447">
    <property type="entry name" value="FDX_ACB"/>
    <property type="match status" value="1"/>
</dbReference>
<dbReference type="PROSITE" id="PS50886">
    <property type="entry name" value="TRBD"/>
    <property type="match status" value="1"/>
</dbReference>
<accession>Q728S0</accession>
<name>SYFB_NITV2</name>
<protein>
    <recommendedName>
        <fullName evidence="1">Phenylalanine--tRNA ligase beta subunit</fullName>
        <ecNumber evidence="1">6.1.1.20</ecNumber>
    </recommendedName>
    <alternativeName>
        <fullName evidence="1">Phenylalanyl-tRNA synthetase beta subunit</fullName>
        <shortName evidence="1">PheRS</shortName>
    </alternativeName>
</protein>
<keyword id="KW-0030">Aminoacyl-tRNA synthetase</keyword>
<keyword id="KW-0067">ATP-binding</keyword>
<keyword id="KW-0963">Cytoplasm</keyword>
<keyword id="KW-0436">Ligase</keyword>
<keyword id="KW-0460">Magnesium</keyword>
<keyword id="KW-0479">Metal-binding</keyword>
<keyword id="KW-0547">Nucleotide-binding</keyword>
<keyword id="KW-0648">Protein biosynthesis</keyword>
<keyword id="KW-1185">Reference proteome</keyword>
<keyword id="KW-0694">RNA-binding</keyword>
<keyword id="KW-0820">tRNA-binding</keyword>
<gene>
    <name evidence="1" type="primary">pheT</name>
    <name type="ordered locus">DVU_2533</name>
</gene>
<feature type="chain" id="PRO_0000126879" description="Phenylalanine--tRNA ligase beta subunit">
    <location>
        <begin position="1"/>
        <end position="798"/>
    </location>
</feature>
<feature type="domain" description="tRNA-binding" evidence="1">
    <location>
        <begin position="39"/>
        <end position="148"/>
    </location>
</feature>
<feature type="domain" description="B5" evidence="1">
    <location>
        <begin position="402"/>
        <end position="478"/>
    </location>
</feature>
<feature type="domain" description="FDX-ACB" evidence="1">
    <location>
        <begin position="708"/>
        <end position="798"/>
    </location>
</feature>
<feature type="binding site" evidence="1">
    <location>
        <position position="456"/>
    </location>
    <ligand>
        <name>Mg(2+)</name>
        <dbReference type="ChEBI" id="CHEBI:18420"/>
        <note>shared with alpha subunit</note>
    </ligand>
</feature>
<feature type="binding site" evidence="1">
    <location>
        <position position="462"/>
    </location>
    <ligand>
        <name>Mg(2+)</name>
        <dbReference type="ChEBI" id="CHEBI:18420"/>
        <note>shared with alpha subunit</note>
    </ligand>
</feature>
<feature type="binding site" evidence="1">
    <location>
        <position position="465"/>
    </location>
    <ligand>
        <name>Mg(2+)</name>
        <dbReference type="ChEBI" id="CHEBI:18420"/>
        <note>shared with alpha subunit</note>
    </ligand>
</feature>
<feature type="binding site" evidence="1">
    <location>
        <position position="466"/>
    </location>
    <ligand>
        <name>Mg(2+)</name>
        <dbReference type="ChEBI" id="CHEBI:18420"/>
        <note>shared with alpha subunit</note>
    </ligand>
</feature>